<comment type="function">
    <text evidence="1">Component of the post-replicative DNA mismatch repair system (MMR). Heterodimerizes with MSH2 to form MutS beta, which binds to DNA mismatches thereby initiating DNA repair. MSH3 provides substrate-binding and substrate specificity to the complex. When bound, the MutS beta heterodimer bends the DNA helix and shields approximately 20 base pairs. Acts mainly to repair insertion-deletion loops (IDLs) from 2 to 13 nucleotides in size, but can also repair base-base and single insertion-deletion mismatches that occur during replication. After mismatch binding, forms a ternary complex with the MutL alpha heterodimer, which is thought to be responsible for directing the downstream MMR events, including strand discrimination, excision, and resynthesis. ATP binding and hydrolysis play a pivotal role in mismatch repair functions (By similarity).</text>
</comment>
<comment type="subunit">
    <text evidence="1">Heterodimer consisting of MSH2-MSH3 (MutS beta). Forms a ternary complex with MutL alpha (MLH1-PMS1) (By similarity).</text>
</comment>
<comment type="subcellular location">
    <subcellularLocation>
        <location evidence="1">Nucleus</location>
    </subcellularLocation>
</comment>
<comment type="similarity">
    <text evidence="4">Belongs to the DNA mismatch repair MutS family. MSH3 subfamily.</text>
</comment>
<gene>
    <name type="primary">MSH3</name>
    <name type="ordered locus">CNBC5700</name>
</gene>
<organism>
    <name type="scientific">Cryptococcus neoformans var. neoformans serotype D (strain B-3501A)</name>
    <name type="common">Filobasidiella neoformans</name>
    <dbReference type="NCBI Taxonomy" id="283643"/>
    <lineage>
        <taxon>Eukaryota</taxon>
        <taxon>Fungi</taxon>
        <taxon>Dikarya</taxon>
        <taxon>Basidiomycota</taxon>
        <taxon>Agaricomycotina</taxon>
        <taxon>Tremellomycetes</taxon>
        <taxon>Tremellales</taxon>
        <taxon>Cryptococcaceae</taxon>
        <taxon>Cryptococcus</taxon>
        <taxon>Cryptococcus neoformans species complex</taxon>
    </lineage>
</organism>
<sequence length="1191" mass="132701">MPSEGSQQPSLDSFFKRKNPRVEPYSRTGNNAIIDLTDSPPNKKIKLDDEGSQKNRSMTQTSSSYFKGHPTARPLSVDKRLPRKPSAAIQAYKLQDVIPPQPSHSGLAFETCSLVPQASFVPDSQPEPSASPAPQRTTEQLKRHEEWKTRILAMSGSFRRKRSLALDEAVAAEAREAAGLEDEGTPFDGSDGDDYKSESEKNAEEVGKQLKKYVAKELAGKGKSKGKKKEEIGPSGLAYTPLEKQFMEIKEQNRDVLLLMEVGYKYKFHGEDAKTASRELGIVAFPNRNFFTASIPTHRLHIHVKKLLSLGYKVGVITQTETAALKKIGDNRNAPFARKLTHLFTAATYVEDPSLSSSSSSSSSVRFDDPVVPGTAPPPTNALVAIVEQPVDRASDDRVKVGLVCVVPGTGDITWDEFDDSQIRTELETRLAHLSPAELLLPKQRLTKATEKVLTYFAGEPKHRGRNAVRIERIDNIPEYDAAFDFLTNFYHCKEHKATVSKGDVNDERHLMTEGNKQWSLQPKLSQDGADISLDEEIYLASGVSSSKAILTLVDFPKQVVISMAVAIRYMKRFGLENAFKHTSSFVRFANRSHMLLSSNTLANLEIYQNQTDGGLYGSLIWLLDHCKTRMGKRLLREWVGRPLLDVAALKARADAIEEIMENNSYHMEKLRSLLINMPDLVRGLTRVQYGKATPNELATLLITLVRLASEFKPNMGNVFRSCLLNNIPNTLPTILDTSQRFLNALNLKQARENDVANLWADPDRFPDIQDVKDCISVCEMELNEHLMELRKILKKPTLRYITVSGIEYLVEVPIRDTKIVPAQWMKISATRTVNRYHTPKILAITKERTQHLEKLSIVAREAFIAFQSEVAEYHELVVVSKQIAVIDCLMSLAQTAAASGYCKPKFVAEPELKILAGRHPMVEMLREESYVPFDIHFSKEEGTTKIITGPNMAGKSSTVRAMALIVCMAQIGSFVPAASVTLSVHDSVQTRMGASDEIGRGKSTFMVELSETSDILQTITPRSLVVLDELGRGTSTYDGIAIAYATLSHIAEIGCNTLFVTHYPTVAQDLAREKPDKISNWHMSFDEIQMPDGGAEITFLYQLTRGLQEASFGVWCARLAGLPKPILDTAQMRSSSLKAETQERLRGIVARRVGWMLHNLFDNKTSSSQVLRNVEMLHNSLSSSSISFSQ</sequence>
<reference key="1">
    <citation type="journal article" date="2005" name="Science">
        <title>The genome of the basidiomycetous yeast and human pathogen Cryptococcus neoformans.</title>
        <authorList>
            <person name="Loftus B.J."/>
            <person name="Fung E."/>
            <person name="Roncaglia P."/>
            <person name="Rowley D."/>
            <person name="Amedeo P."/>
            <person name="Bruno D."/>
            <person name="Vamathevan J."/>
            <person name="Miranda M."/>
            <person name="Anderson I.J."/>
            <person name="Fraser J.A."/>
            <person name="Allen J.E."/>
            <person name="Bosdet I.E."/>
            <person name="Brent M.R."/>
            <person name="Chiu R."/>
            <person name="Doering T.L."/>
            <person name="Donlin M.J."/>
            <person name="D'Souza C.A."/>
            <person name="Fox D.S."/>
            <person name="Grinberg V."/>
            <person name="Fu J."/>
            <person name="Fukushima M."/>
            <person name="Haas B.J."/>
            <person name="Huang J.C."/>
            <person name="Janbon G."/>
            <person name="Jones S.J.M."/>
            <person name="Koo H.L."/>
            <person name="Krzywinski M.I."/>
            <person name="Kwon-Chung K.J."/>
            <person name="Lengeler K.B."/>
            <person name="Maiti R."/>
            <person name="Marra M.A."/>
            <person name="Marra R.E."/>
            <person name="Mathewson C.A."/>
            <person name="Mitchell T.G."/>
            <person name="Pertea M."/>
            <person name="Riggs F.R."/>
            <person name="Salzberg S.L."/>
            <person name="Schein J.E."/>
            <person name="Shvartsbeyn A."/>
            <person name="Shin H."/>
            <person name="Shumway M."/>
            <person name="Specht C.A."/>
            <person name="Suh B.B."/>
            <person name="Tenney A."/>
            <person name="Utterback T.R."/>
            <person name="Wickes B.L."/>
            <person name="Wortman J.R."/>
            <person name="Wye N.H."/>
            <person name="Kronstad J.W."/>
            <person name="Lodge J.K."/>
            <person name="Heitman J."/>
            <person name="Davis R.W."/>
            <person name="Fraser C.M."/>
            <person name="Hyman R.W."/>
        </authorList>
    </citation>
    <scope>NUCLEOTIDE SEQUENCE [LARGE SCALE GENOMIC DNA]</scope>
    <source>
        <strain>B-3501A</strain>
    </source>
</reference>
<proteinExistence type="inferred from homology"/>
<keyword id="KW-0067">ATP-binding</keyword>
<keyword id="KW-0227">DNA damage</keyword>
<keyword id="KW-0234">DNA repair</keyword>
<keyword id="KW-0238">DNA-binding</keyword>
<keyword id="KW-0547">Nucleotide-binding</keyword>
<keyword id="KW-0539">Nucleus</keyword>
<feature type="chain" id="PRO_0000410153" description="DNA mismatch repair protein MSH3">
    <location>
        <begin position="1"/>
        <end position="1191"/>
    </location>
</feature>
<feature type="region of interest" description="Disordered" evidence="3">
    <location>
        <begin position="1"/>
        <end position="82"/>
    </location>
</feature>
<feature type="region of interest" description="Disordered" evidence="3">
    <location>
        <begin position="118"/>
        <end position="148"/>
    </location>
</feature>
<feature type="region of interest" description="Disordered" evidence="3">
    <location>
        <begin position="175"/>
        <end position="203"/>
    </location>
</feature>
<feature type="region of interest" description="Mispair-binding domain" evidence="1">
    <location>
        <begin position="233"/>
        <end position="347"/>
    </location>
</feature>
<feature type="compositionally biased region" description="Polar residues" evidence="3">
    <location>
        <begin position="1"/>
        <end position="11"/>
    </location>
</feature>
<feature type="compositionally biased region" description="Polar residues" evidence="3">
    <location>
        <begin position="54"/>
        <end position="65"/>
    </location>
</feature>
<feature type="compositionally biased region" description="Low complexity" evidence="3">
    <location>
        <begin position="122"/>
        <end position="135"/>
    </location>
</feature>
<feature type="compositionally biased region" description="Basic and acidic residues" evidence="3">
    <location>
        <begin position="139"/>
        <end position="148"/>
    </location>
</feature>
<feature type="compositionally biased region" description="Basic and acidic residues" evidence="3">
    <location>
        <begin position="193"/>
        <end position="203"/>
    </location>
</feature>
<feature type="binding site" evidence="2">
    <location>
        <begin position="950"/>
        <end position="957"/>
    </location>
    <ligand>
        <name>ATP</name>
        <dbReference type="ChEBI" id="CHEBI:30616"/>
    </ligand>
</feature>
<accession>P0CO93</accession>
<accession>Q55VB4</accession>
<accession>Q5KKX1</accession>
<dbReference type="EMBL" id="AAEY01000016">
    <property type="protein sequence ID" value="EAL21706.1"/>
    <property type="molecule type" value="Genomic_DNA"/>
</dbReference>
<dbReference type="RefSeq" id="XP_776353.1">
    <property type="nucleotide sequence ID" value="XM_771260.1"/>
</dbReference>
<dbReference type="SMR" id="P0CO93"/>
<dbReference type="GeneID" id="4935236"/>
<dbReference type="KEGG" id="cnb:CNBC5700"/>
<dbReference type="VEuPathDB" id="FungiDB:CNBC5700"/>
<dbReference type="HOGENOM" id="CLU_002472_0_2_1"/>
<dbReference type="OrthoDB" id="2806at5206"/>
<dbReference type="GO" id="GO:0005634">
    <property type="term" value="C:nucleus"/>
    <property type="evidence" value="ECO:0007669"/>
    <property type="project" value="UniProtKB-SubCell"/>
</dbReference>
<dbReference type="GO" id="GO:0005524">
    <property type="term" value="F:ATP binding"/>
    <property type="evidence" value="ECO:0007669"/>
    <property type="project" value="UniProtKB-KW"/>
</dbReference>
<dbReference type="GO" id="GO:0140664">
    <property type="term" value="F:ATP-dependent DNA damage sensor activity"/>
    <property type="evidence" value="ECO:0007669"/>
    <property type="project" value="InterPro"/>
</dbReference>
<dbReference type="GO" id="GO:0030983">
    <property type="term" value="F:mismatched DNA binding"/>
    <property type="evidence" value="ECO:0007669"/>
    <property type="project" value="InterPro"/>
</dbReference>
<dbReference type="GO" id="GO:0006298">
    <property type="term" value="P:mismatch repair"/>
    <property type="evidence" value="ECO:0007669"/>
    <property type="project" value="InterPro"/>
</dbReference>
<dbReference type="GO" id="GO:0006312">
    <property type="term" value="P:mitotic recombination"/>
    <property type="evidence" value="ECO:0007669"/>
    <property type="project" value="TreeGrafter"/>
</dbReference>
<dbReference type="CDD" id="cd03287">
    <property type="entry name" value="ABC_MSH3_euk"/>
    <property type="match status" value="1"/>
</dbReference>
<dbReference type="FunFam" id="1.10.1420.10:FF:000037">
    <property type="entry name" value="DNA mismatch repair protein"/>
    <property type="match status" value="1"/>
</dbReference>
<dbReference type="FunFam" id="3.40.1170.10:FF:000004">
    <property type="entry name" value="DNA mismatch repair protein"/>
    <property type="match status" value="1"/>
</dbReference>
<dbReference type="Gene3D" id="1.10.1420.10">
    <property type="match status" value="2"/>
</dbReference>
<dbReference type="Gene3D" id="3.40.1170.10">
    <property type="entry name" value="DNA repair protein MutS, domain I"/>
    <property type="match status" value="1"/>
</dbReference>
<dbReference type="Gene3D" id="3.30.420.110">
    <property type="entry name" value="MutS, connector domain"/>
    <property type="match status" value="1"/>
</dbReference>
<dbReference type="Gene3D" id="3.40.50.300">
    <property type="entry name" value="P-loop containing nucleotide triphosphate hydrolases"/>
    <property type="match status" value="1"/>
</dbReference>
<dbReference type="InterPro" id="IPR007695">
    <property type="entry name" value="DNA_mismatch_repair_MutS-lik_N"/>
</dbReference>
<dbReference type="InterPro" id="IPR000432">
    <property type="entry name" value="DNA_mismatch_repair_MutS_C"/>
</dbReference>
<dbReference type="InterPro" id="IPR007861">
    <property type="entry name" value="DNA_mismatch_repair_MutS_clamp"/>
</dbReference>
<dbReference type="InterPro" id="IPR007696">
    <property type="entry name" value="DNA_mismatch_repair_MutS_core"/>
</dbReference>
<dbReference type="InterPro" id="IPR016151">
    <property type="entry name" value="DNA_mismatch_repair_MutS_N"/>
</dbReference>
<dbReference type="InterPro" id="IPR036187">
    <property type="entry name" value="DNA_mismatch_repair_MutS_sf"/>
</dbReference>
<dbReference type="InterPro" id="IPR007860">
    <property type="entry name" value="DNA_mmatch_repair_MutS_con_dom"/>
</dbReference>
<dbReference type="InterPro" id="IPR045076">
    <property type="entry name" value="MutS"/>
</dbReference>
<dbReference type="InterPro" id="IPR036678">
    <property type="entry name" value="MutS_con_dom_sf"/>
</dbReference>
<dbReference type="InterPro" id="IPR027417">
    <property type="entry name" value="P-loop_NTPase"/>
</dbReference>
<dbReference type="PANTHER" id="PTHR11361:SF122">
    <property type="entry name" value="DNA MISMATCH REPAIR PROTEIN MSH3"/>
    <property type="match status" value="1"/>
</dbReference>
<dbReference type="PANTHER" id="PTHR11361">
    <property type="entry name" value="DNA MISMATCH REPAIR PROTEIN MUTS FAMILY MEMBER"/>
    <property type="match status" value="1"/>
</dbReference>
<dbReference type="Pfam" id="PF01624">
    <property type="entry name" value="MutS_I"/>
    <property type="match status" value="1"/>
</dbReference>
<dbReference type="Pfam" id="PF05188">
    <property type="entry name" value="MutS_II"/>
    <property type="match status" value="1"/>
</dbReference>
<dbReference type="Pfam" id="PF05192">
    <property type="entry name" value="MutS_III"/>
    <property type="match status" value="1"/>
</dbReference>
<dbReference type="Pfam" id="PF05190">
    <property type="entry name" value="MutS_IV"/>
    <property type="match status" value="1"/>
</dbReference>
<dbReference type="Pfam" id="PF00488">
    <property type="entry name" value="MutS_V"/>
    <property type="match status" value="1"/>
</dbReference>
<dbReference type="SMART" id="SM00534">
    <property type="entry name" value="MUTSac"/>
    <property type="match status" value="1"/>
</dbReference>
<dbReference type="SMART" id="SM00533">
    <property type="entry name" value="MUTSd"/>
    <property type="match status" value="1"/>
</dbReference>
<dbReference type="SUPFAM" id="SSF55271">
    <property type="entry name" value="DNA repair protein MutS, domain I"/>
    <property type="match status" value="1"/>
</dbReference>
<dbReference type="SUPFAM" id="SSF48334">
    <property type="entry name" value="DNA repair protein MutS, domain III"/>
    <property type="match status" value="1"/>
</dbReference>
<dbReference type="SUPFAM" id="SSF52540">
    <property type="entry name" value="P-loop containing nucleoside triphosphate hydrolases"/>
    <property type="match status" value="1"/>
</dbReference>
<dbReference type="PROSITE" id="PS00486">
    <property type="entry name" value="DNA_MISMATCH_REPAIR_2"/>
    <property type="match status" value="1"/>
</dbReference>
<protein>
    <recommendedName>
        <fullName>DNA mismatch repair protein MSH3</fullName>
    </recommendedName>
    <alternativeName>
        <fullName>MutS protein homolog 3</fullName>
    </alternativeName>
</protein>
<name>MSH3_CRYNB</name>
<evidence type="ECO:0000250" key="1"/>
<evidence type="ECO:0000255" key="2"/>
<evidence type="ECO:0000256" key="3">
    <source>
        <dbReference type="SAM" id="MobiDB-lite"/>
    </source>
</evidence>
<evidence type="ECO:0000305" key="4"/>